<protein>
    <recommendedName>
        <fullName>PC4 and SFRS1-interacting protein</fullName>
    </recommendedName>
    <alternativeName>
        <fullName>Lens epithelium-derived growth factor</fullName>
    </alternativeName>
</protein>
<reference key="1">
    <citation type="submission" date="2001-01" db="EMBL/GenBank/DDBJ databases">
        <authorList>
            <person name="Yu L."/>
        </authorList>
    </citation>
    <scope>NUCLEOTIDE SEQUENCE [MRNA] (ISOFORMS 1 AND 2)</scope>
</reference>
<reference key="2">
    <citation type="journal article" date="2012" name="Nat. Commun.">
        <title>Quantitative maps of protein phosphorylation sites across 14 different rat organs and tissues.</title>
        <authorList>
            <person name="Lundby A."/>
            <person name="Secher A."/>
            <person name="Lage K."/>
            <person name="Nordsborg N.B."/>
            <person name="Dmytriyev A."/>
            <person name="Lundby C."/>
            <person name="Olsen J.V."/>
        </authorList>
    </citation>
    <scope>PHOSPHORYLATION [LARGE SCALE ANALYSIS] AT SER-102; SER-106; THR-122; SER-129; SER-176 AND SER-274</scope>
    <scope>IDENTIFICATION BY MASS SPECTROMETRY [LARGE SCALE ANALYSIS]</scope>
</reference>
<gene>
    <name type="primary">Psip1</name>
    <name type="synonym">Ledgf</name>
</gene>
<accession>Q812D1</accession>
<accession>Q7TNY0</accession>
<evidence type="ECO:0000250" key="1"/>
<evidence type="ECO:0000250" key="2">
    <source>
        <dbReference type="UniProtKB" id="O75475"/>
    </source>
</evidence>
<evidence type="ECO:0000250" key="3">
    <source>
        <dbReference type="UniProtKB" id="Q99JF8"/>
    </source>
</evidence>
<evidence type="ECO:0000255" key="4"/>
<evidence type="ECO:0000255" key="5">
    <source>
        <dbReference type="PROSITE-ProRule" id="PRU00162"/>
    </source>
</evidence>
<evidence type="ECO:0000256" key="6">
    <source>
        <dbReference type="SAM" id="MobiDB-lite"/>
    </source>
</evidence>
<evidence type="ECO:0000303" key="7">
    <source ref="1"/>
</evidence>
<evidence type="ECO:0000305" key="8"/>
<evidence type="ECO:0007744" key="9">
    <source>
    </source>
</evidence>
<name>PSIP1_RAT</name>
<proteinExistence type="evidence at protein level"/>
<organism>
    <name type="scientific">Rattus norvegicus</name>
    <name type="common">Rat</name>
    <dbReference type="NCBI Taxonomy" id="10116"/>
    <lineage>
        <taxon>Eukaryota</taxon>
        <taxon>Metazoa</taxon>
        <taxon>Chordata</taxon>
        <taxon>Craniata</taxon>
        <taxon>Vertebrata</taxon>
        <taxon>Euteleostomi</taxon>
        <taxon>Mammalia</taxon>
        <taxon>Eutheria</taxon>
        <taxon>Euarchontoglires</taxon>
        <taxon>Glires</taxon>
        <taxon>Rodentia</taxon>
        <taxon>Myomorpha</taxon>
        <taxon>Muroidea</taxon>
        <taxon>Muridae</taxon>
        <taxon>Murinae</taxon>
        <taxon>Rattus</taxon>
    </lineage>
</organism>
<keyword id="KW-0025">Alternative splicing</keyword>
<keyword id="KW-0164">Citrullination</keyword>
<keyword id="KW-0175">Coiled coil</keyword>
<keyword id="KW-0238">DNA-binding</keyword>
<keyword id="KW-1017">Isopeptide bond</keyword>
<keyword id="KW-0539">Nucleus</keyword>
<keyword id="KW-0597">Phosphoprotein</keyword>
<keyword id="KW-1185">Reference proteome</keyword>
<keyword id="KW-0804">Transcription</keyword>
<keyword id="KW-0805">Transcription regulation</keyword>
<keyword id="KW-0832">Ubl conjugation</keyword>
<sequence>MTRDFKPGDLIFAKMKGYPHWPARVDEVPDGAVKPPTNKLPIFFFGTHETAFLGPKDIFPYSENKEKYGKPNKRKGFNEGLWEIDNNPKVKFSSQQVSTKQSNASSDVEAEEKETSVSKEDTDQEEKASNEDVTKAADITTPKAARRGRKRKAEKQVDTEEAGVVTAATASNVKASPKRGRPAATEVKIPKPRGRPKVVKQPCPSESDMVIDEDKSKKKGPEEKPPKKQLKKEEEGQKEEEKPRKEPDKKEGKKEVESKRKNLAKPGVTSTSDSEEDDDQEGEKKRKGGRHFQAAHRRNMLKGQHEKEAADRKRKQEEQMETEQQTKDEGKKPEVKKVEKKRETSMDSRLQRIHAEIKNSLKIDNLDVNRCIEALDELASLQVTMQQAQKHTEMITTLKKIRRFKVSQVIMEKSTMLYNKFKNMFLVGEGDSVITQVLNKSLAEQRQHEEANKTKDQGKKGPNKKLEKEQTGTKSLNGGSDAQESNHPQHNGDSAEESKDSREAGSKTKTPGEEREAEVSLKESTLDN</sequence>
<feature type="chain" id="PRO_0000191710" description="PC4 and SFRS1-interacting protein">
    <location>
        <begin position="1"/>
        <end position="528"/>
    </location>
</feature>
<feature type="domain" description="PWWP" evidence="5">
    <location>
        <begin position="7"/>
        <end position="64"/>
    </location>
</feature>
<feature type="region of interest" description="Disordered" evidence="6">
    <location>
        <begin position="86"/>
        <end position="347"/>
    </location>
</feature>
<feature type="region of interest" description="Integrase-binding domain (IBD)" evidence="2">
    <location>
        <begin position="338"/>
        <end position="415"/>
    </location>
</feature>
<feature type="region of interest" description="Disordered" evidence="6">
    <location>
        <begin position="444"/>
        <end position="528"/>
    </location>
</feature>
<feature type="coiled-coil region" evidence="4">
    <location>
        <begin position="304"/>
        <end position="332"/>
    </location>
</feature>
<feature type="coiled-coil region" evidence="4">
    <location>
        <begin position="369"/>
        <end position="393"/>
    </location>
</feature>
<feature type="short sequence motif" description="Nuclear localization signal" evidence="2">
    <location>
        <begin position="146"/>
        <end position="156"/>
    </location>
</feature>
<feature type="compositionally biased region" description="Polar residues" evidence="6">
    <location>
        <begin position="92"/>
        <end position="106"/>
    </location>
</feature>
<feature type="compositionally biased region" description="Basic and acidic residues" evidence="6">
    <location>
        <begin position="113"/>
        <end position="135"/>
    </location>
</feature>
<feature type="compositionally biased region" description="Basic residues" evidence="6">
    <location>
        <begin position="144"/>
        <end position="153"/>
    </location>
</feature>
<feature type="compositionally biased region" description="Basic and acidic residues" evidence="6">
    <location>
        <begin position="212"/>
        <end position="260"/>
    </location>
</feature>
<feature type="compositionally biased region" description="Basic residues" evidence="6">
    <location>
        <begin position="285"/>
        <end position="300"/>
    </location>
</feature>
<feature type="compositionally biased region" description="Basic and acidic residues" evidence="6">
    <location>
        <begin position="303"/>
        <end position="347"/>
    </location>
</feature>
<feature type="compositionally biased region" description="Basic and acidic residues" evidence="6">
    <location>
        <begin position="444"/>
        <end position="471"/>
    </location>
</feature>
<feature type="compositionally biased region" description="Polar residues" evidence="6">
    <location>
        <begin position="472"/>
        <end position="492"/>
    </location>
</feature>
<feature type="compositionally biased region" description="Basic and acidic residues" evidence="6">
    <location>
        <begin position="496"/>
        <end position="528"/>
    </location>
</feature>
<feature type="modified residue" description="Phosphoserine" evidence="9">
    <location>
        <position position="102"/>
    </location>
</feature>
<feature type="modified residue" description="Phosphoserine" evidence="3">
    <location>
        <position position="105"/>
    </location>
</feature>
<feature type="modified residue" description="Phosphoserine" evidence="9">
    <location>
        <position position="106"/>
    </location>
</feature>
<feature type="modified residue" description="Phosphothreonine" evidence="3">
    <location>
        <position position="115"/>
    </location>
</feature>
<feature type="modified residue" description="Phosphothreonine" evidence="9">
    <location>
        <position position="122"/>
    </location>
</feature>
<feature type="modified residue" description="Phosphoserine" evidence="9">
    <location>
        <position position="129"/>
    </location>
</feature>
<feature type="modified residue" description="Phosphothreonine" evidence="2">
    <location>
        <position position="141"/>
    </location>
</feature>
<feature type="modified residue" description="Phosphoserine" evidence="9">
    <location>
        <position position="176"/>
    </location>
</feature>
<feature type="modified residue" description="Phosphoserine" evidence="2">
    <location>
        <position position="205"/>
    </location>
</feature>
<feature type="modified residue" description="Phosphoserine" evidence="2">
    <location>
        <position position="270"/>
    </location>
</feature>
<feature type="modified residue" description="Phosphothreonine" evidence="2">
    <location>
        <position position="271"/>
    </location>
</feature>
<feature type="modified residue" description="Phosphoserine" evidence="2">
    <location>
        <position position="272"/>
    </location>
</feature>
<feature type="modified residue" description="Phosphoserine" evidence="9">
    <location>
        <position position="274"/>
    </location>
</feature>
<feature type="modified residue" description="Phosphoserine" evidence="2">
    <location>
        <position position="432"/>
    </location>
</feature>
<feature type="modified residue" description="Phosphothreonine" evidence="2">
    <location>
        <position position="435"/>
    </location>
</feature>
<feature type="modified residue" description="Phosphoserine" evidence="2">
    <location>
        <position position="441"/>
    </location>
</feature>
<feature type="modified residue" description="Citrulline" evidence="1">
    <location>
        <position position="515"/>
    </location>
</feature>
<feature type="modified residue" description="Phosphoserine" evidence="2">
    <location>
        <position position="520"/>
    </location>
</feature>
<feature type="modified residue" description="Phosphothreonine" evidence="2">
    <location>
        <position position="525"/>
    </location>
</feature>
<feature type="cross-link" description="Glycyl lysine isopeptide (Lys-Gly) (interchain with G-Cter in SUMO2)" evidence="2">
    <location>
        <position position="75"/>
    </location>
</feature>
<feature type="splice variant" id="VSP_014301" description="In isoform 2." evidence="7">
    <original>QQTKDEGK</original>
    <variation>HQTTCNLQ</variation>
    <location>
        <begin position="324"/>
        <end position="331"/>
    </location>
</feature>
<feature type="splice variant" id="VSP_014302" description="In isoform 2." evidence="7">
    <location>
        <begin position="332"/>
        <end position="528"/>
    </location>
</feature>
<feature type="sequence conflict" description="In Ref. 1; AAP97282." evidence="8" ref="1">
    <original>D</original>
    <variation>Y</variation>
    <location>
        <position position="273"/>
    </location>
</feature>
<feature type="sequence conflict" description="In Ref. 1; AAP97282." evidence="8" ref="1">
    <original>H</original>
    <variation>N</variation>
    <location>
        <position position="291"/>
    </location>
</feature>
<comment type="function">
    <text evidence="2">Transcriptional coactivator involved in neuroepithelial stem cell differentiation and neurogenesis. Involved in particular in lens epithelial cell gene regulation and stress responses. May play an important role in lens epithelial to fiber cell terminal differentiation. May play a protective role during stress-induced apoptosis (By similarity).</text>
</comment>
<comment type="subunit">
    <text evidence="2">Monomer (By similarity). Interacts with IFRD1/PC4 (By similarity). Interacts (via IBD domain) with POGZ (via IBM motif) and CDCA7L (via IBM motifs) (By similarity). Interacts (via IBD domain) with KMT2A (via IBM motifs) with a moderate affinity whereas interacts with the KMT2A-MEN1 complex with a greater affinity; MEN1 enhances interaction of KMT2A with PSIP1 (By similarity). Interacts (via IBD domain) with IWS1 (via IBM motif), MED1 (via IBM motif) and DBF4 (via IBM motifs) (By similarity).</text>
</comment>
<comment type="subcellular location">
    <subcellularLocation>
        <location evidence="2">Nucleus</location>
    </subcellularLocation>
</comment>
<comment type="alternative products">
    <event type="alternative splicing"/>
    <isoform>
        <id>Q812D1-1</id>
        <name>1</name>
        <name>Ledgfa</name>
        <sequence type="displayed"/>
    </isoform>
    <isoform>
        <id>Q812D1-2</id>
        <name>2</name>
        <name>Ledgfb</name>
        <sequence type="described" ref="VSP_014301 VSP_014302"/>
    </isoform>
</comment>
<comment type="PTM">
    <text evidence="3">Citrullinated by PADI4.</text>
</comment>
<comment type="similarity">
    <text evidence="8">Belongs to the HDGF family.</text>
</comment>
<dbReference type="EMBL" id="AF339084">
    <property type="protein sequence ID" value="AAO32951.1"/>
    <property type="molecule type" value="mRNA"/>
</dbReference>
<dbReference type="EMBL" id="AF372090">
    <property type="protein sequence ID" value="AAP97282.1"/>
    <property type="molecule type" value="mRNA"/>
</dbReference>
<dbReference type="RefSeq" id="NP_786941.1">
    <molecule id="Q812D1-1"/>
    <property type="nucleotide sequence ID" value="NM_175765.2"/>
</dbReference>
<dbReference type="BMRB" id="Q812D1"/>
<dbReference type="SMR" id="Q812D1"/>
<dbReference type="FunCoup" id="Q812D1">
    <property type="interactions" value="3381"/>
</dbReference>
<dbReference type="STRING" id="10116.ENSRNOP00000016130"/>
<dbReference type="iPTMnet" id="Q812D1"/>
<dbReference type="PhosphoSitePlus" id="Q812D1"/>
<dbReference type="jPOST" id="Q812D1"/>
<dbReference type="PaxDb" id="10116-ENSRNOP00000016130"/>
<dbReference type="GeneID" id="313323"/>
<dbReference type="KEGG" id="rno:313323"/>
<dbReference type="UCSC" id="RGD:631439">
    <molecule id="Q812D1-1"/>
    <property type="organism name" value="rat"/>
</dbReference>
<dbReference type="AGR" id="RGD:631439"/>
<dbReference type="CTD" id="11168"/>
<dbReference type="RGD" id="631439">
    <property type="gene designation" value="Psip1"/>
</dbReference>
<dbReference type="eggNOG" id="KOG1904">
    <property type="taxonomic scope" value="Eukaryota"/>
</dbReference>
<dbReference type="InParanoid" id="Q812D1"/>
<dbReference type="OrthoDB" id="62853at2759"/>
<dbReference type="PhylomeDB" id="Q812D1"/>
<dbReference type="Reactome" id="R-RNO-9772755">
    <property type="pathway name" value="Formation of WDR5-containing histone-modifying complexes"/>
</dbReference>
<dbReference type="PRO" id="PR:Q812D1"/>
<dbReference type="Proteomes" id="UP000002494">
    <property type="component" value="Unplaced"/>
</dbReference>
<dbReference type="GO" id="GO:0000791">
    <property type="term" value="C:euchromatin"/>
    <property type="evidence" value="ECO:0000314"/>
    <property type="project" value="UniProtKB"/>
</dbReference>
<dbReference type="GO" id="GO:0000792">
    <property type="term" value="C:heterochromatin"/>
    <property type="evidence" value="ECO:0000314"/>
    <property type="project" value="UniProtKB"/>
</dbReference>
<dbReference type="GO" id="GO:0034399">
    <property type="term" value="C:nuclear periphery"/>
    <property type="evidence" value="ECO:0000250"/>
    <property type="project" value="UniProtKB"/>
</dbReference>
<dbReference type="GO" id="GO:0005654">
    <property type="term" value="C:nucleoplasm"/>
    <property type="evidence" value="ECO:0000250"/>
    <property type="project" value="UniProtKB"/>
</dbReference>
<dbReference type="GO" id="GO:0005634">
    <property type="term" value="C:nucleus"/>
    <property type="evidence" value="ECO:0000250"/>
    <property type="project" value="UniProtKB"/>
</dbReference>
<dbReference type="GO" id="GO:0003682">
    <property type="term" value="F:chromatin binding"/>
    <property type="evidence" value="ECO:0000250"/>
    <property type="project" value="UniProtKB"/>
</dbReference>
<dbReference type="GO" id="GO:0140297">
    <property type="term" value="F:DNA-binding transcription factor binding"/>
    <property type="evidence" value="ECO:0000250"/>
    <property type="project" value="UniProtKB"/>
</dbReference>
<dbReference type="GO" id="GO:0097100">
    <property type="term" value="F:supercoiled DNA binding"/>
    <property type="evidence" value="ECO:0000314"/>
    <property type="project" value="UniProtKB"/>
</dbReference>
<dbReference type="GO" id="GO:0003713">
    <property type="term" value="F:transcription coactivator activity"/>
    <property type="evidence" value="ECO:0000250"/>
    <property type="project" value="UniProtKB"/>
</dbReference>
<dbReference type="GO" id="GO:0006338">
    <property type="term" value="P:chromatin remodeling"/>
    <property type="evidence" value="ECO:0000318"/>
    <property type="project" value="GO_Central"/>
</dbReference>
<dbReference type="GO" id="GO:0000395">
    <property type="term" value="P:mRNA 5'-splice site recognition"/>
    <property type="evidence" value="ECO:0000250"/>
    <property type="project" value="UniProtKB"/>
</dbReference>
<dbReference type="GO" id="GO:0045944">
    <property type="term" value="P:positive regulation of transcription by RNA polymerase II"/>
    <property type="evidence" value="ECO:0000250"/>
    <property type="project" value="UniProtKB"/>
</dbReference>
<dbReference type="GO" id="GO:0009408">
    <property type="term" value="P:response to heat"/>
    <property type="evidence" value="ECO:0000250"/>
    <property type="project" value="UniProtKB"/>
</dbReference>
<dbReference type="GO" id="GO:0006979">
    <property type="term" value="P:response to oxidative stress"/>
    <property type="evidence" value="ECO:0000250"/>
    <property type="project" value="UniProtKB"/>
</dbReference>
<dbReference type="CDD" id="cd20151">
    <property type="entry name" value="PWWP_PSIP"/>
    <property type="match status" value="1"/>
</dbReference>
<dbReference type="FunFam" id="2.30.30.140:FF:000017">
    <property type="entry name" value="hepatoma-derived growth factor isoform X1"/>
    <property type="match status" value="1"/>
</dbReference>
<dbReference type="FunFam" id="1.20.930.10:FF:000005">
    <property type="entry name" value="PC4 and SFRS1-interacting protein-like isoform X1"/>
    <property type="match status" value="1"/>
</dbReference>
<dbReference type="Gene3D" id="2.30.30.140">
    <property type="match status" value="1"/>
</dbReference>
<dbReference type="Gene3D" id="1.20.930.10">
    <property type="entry name" value="Conserved domain common to transcription factors TFIIS, elongin A, CRSP70"/>
    <property type="match status" value="1"/>
</dbReference>
<dbReference type="InterPro" id="IPR036218">
    <property type="entry name" value="HIVI-bd_sf"/>
</dbReference>
<dbReference type="InterPro" id="IPR021567">
    <property type="entry name" value="LEDGF_IBD"/>
</dbReference>
<dbReference type="InterPro" id="IPR000313">
    <property type="entry name" value="PWWP_dom"/>
</dbReference>
<dbReference type="InterPro" id="IPR035441">
    <property type="entry name" value="TFIIS/LEDGF_dom_sf"/>
</dbReference>
<dbReference type="PANTHER" id="PTHR12550">
    <property type="entry name" value="HEPATOMA-DERIVED GROWTH FACTOR-RELATED"/>
    <property type="match status" value="1"/>
</dbReference>
<dbReference type="PANTHER" id="PTHR12550:SF42">
    <property type="entry name" value="PC4 AND SFRS1-INTERACTING PROTEIN"/>
    <property type="match status" value="1"/>
</dbReference>
<dbReference type="Pfam" id="PF11467">
    <property type="entry name" value="LEDGF"/>
    <property type="match status" value="1"/>
</dbReference>
<dbReference type="Pfam" id="PF00855">
    <property type="entry name" value="PWWP"/>
    <property type="match status" value="1"/>
</dbReference>
<dbReference type="PRINTS" id="PR01503">
    <property type="entry name" value="TREACLE"/>
</dbReference>
<dbReference type="SMART" id="SM00293">
    <property type="entry name" value="PWWP"/>
    <property type="match status" value="1"/>
</dbReference>
<dbReference type="SUPFAM" id="SSF140576">
    <property type="entry name" value="HIV integrase-binding domain"/>
    <property type="match status" value="1"/>
</dbReference>
<dbReference type="SUPFAM" id="SSF63748">
    <property type="entry name" value="Tudor/PWWP/MBT"/>
    <property type="match status" value="1"/>
</dbReference>
<dbReference type="PROSITE" id="PS50812">
    <property type="entry name" value="PWWP"/>
    <property type="match status" value="1"/>
</dbReference>